<protein>
    <recommendedName>
        <fullName evidence="1">Holliday junction branch migration complex subunit RuvB</fullName>
        <ecNumber evidence="1">3.6.4.-</ecNumber>
    </recommendedName>
</protein>
<gene>
    <name evidence="1" type="primary">ruvB</name>
    <name type="ordered locus">OEOE_0578</name>
</gene>
<accession>Q04GA1</accession>
<dbReference type="EC" id="3.6.4.-" evidence="1"/>
<dbReference type="EMBL" id="CP000411">
    <property type="protein sequence ID" value="ABJ56521.1"/>
    <property type="molecule type" value="Genomic_DNA"/>
</dbReference>
<dbReference type="RefSeq" id="WP_002818435.1">
    <property type="nucleotide sequence ID" value="NC_008528.1"/>
</dbReference>
<dbReference type="SMR" id="Q04GA1"/>
<dbReference type="STRING" id="203123.OEOE_0578"/>
<dbReference type="GeneID" id="75065400"/>
<dbReference type="KEGG" id="ooe:OEOE_0578"/>
<dbReference type="eggNOG" id="COG2255">
    <property type="taxonomic scope" value="Bacteria"/>
</dbReference>
<dbReference type="HOGENOM" id="CLU_055599_1_0_9"/>
<dbReference type="Proteomes" id="UP000000774">
    <property type="component" value="Chromosome"/>
</dbReference>
<dbReference type="GO" id="GO:0005737">
    <property type="term" value="C:cytoplasm"/>
    <property type="evidence" value="ECO:0007669"/>
    <property type="project" value="UniProtKB-SubCell"/>
</dbReference>
<dbReference type="GO" id="GO:0048476">
    <property type="term" value="C:Holliday junction resolvase complex"/>
    <property type="evidence" value="ECO:0007669"/>
    <property type="project" value="UniProtKB-UniRule"/>
</dbReference>
<dbReference type="GO" id="GO:0005524">
    <property type="term" value="F:ATP binding"/>
    <property type="evidence" value="ECO:0007669"/>
    <property type="project" value="UniProtKB-UniRule"/>
</dbReference>
<dbReference type="GO" id="GO:0016887">
    <property type="term" value="F:ATP hydrolysis activity"/>
    <property type="evidence" value="ECO:0007669"/>
    <property type="project" value="InterPro"/>
</dbReference>
<dbReference type="GO" id="GO:0000400">
    <property type="term" value="F:four-way junction DNA binding"/>
    <property type="evidence" value="ECO:0007669"/>
    <property type="project" value="UniProtKB-UniRule"/>
</dbReference>
<dbReference type="GO" id="GO:0009378">
    <property type="term" value="F:four-way junction helicase activity"/>
    <property type="evidence" value="ECO:0007669"/>
    <property type="project" value="InterPro"/>
</dbReference>
<dbReference type="GO" id="GO:0006310">
    <property type="term" value="P:DNA recombination"/>
    <property type="evidence" value="ECO:0007669"/>
    <property type="project" value="UniProtKB-UniRule"/>
</dbReference>
<dbReference type="GO" id="GO:0006281">
    <property type="term" value="P:DNA repair"/>
    <property type="evidence" value="ECO:0007669"/>
    <property type="project" value="UniProtKB-UniRule"/>
</dbReference>
<dbReference type="CDD" id="cd00009">
    <property type="entry name" value="AAA"/>
    <property type="match status" value="1"/>
</dbReference>
<dbReference type="Gene3D" id="1.10.8.60">
    <property type="match status" value="1"/>
</dbReference>
<dbReference type="Gene3D" id="3.40.50.300">
    <property type="entry name" value="P-loop containing nucleotide triphosphate hydrolases"/>
    <property type="match status" value="1"/>
</dbReference>
<dbReference type="Gene3D" id="1.10.10.10">
    <property type="entry name" value="Winged helix-like DNA-binding domain superfamily/Winged helix DNA-binding domain"/>
    <property type="match status" value="1"/>
</dbReference>
<dbReference type="HAMAP" id="MF_00016">
    <property type="entry name" value="DNA_HJ_migration_RuvB"/>
    <property type="match status" value="1"/>
</dbReference>
<dbReference type="InterPro" id="IPR003593">
    <property type="entry name" value="AAA+_ATPase"/>
</dbReference>
<dbReference type="InterPro" id="IPR041445">
    <property type="entry name" value="AAA_lid_4"/>
</dbReference>
<dbReference type="InterPro" id="IPR004605">
    <property type="entry name" value="DNA_helicase_Holl-junc_RuvB"/>
</dbReference>
<dbReference type="InterPro" id="IPR027417">
    <property type="entry name" value="P-loop_NTPase"/>
</dbReference>
<dbReference type="InterPro" id="IPR008824">
    <property type="entry name" value="RuvB-like_N"/>
</dbReference>
<dbReference type="InterPro" id="IPR008823">
    <property type="entry name" value="RuvB_C"/>
</dbReference>
<dbReference type="InterPro" id="IPR036388">
    <property type="entry name" value="WH-like_DNA-bd_sf"/>
</dbReference>
<dbReference type="InterPro" id="IPR036390">
    <property type="entry name" value="WH_DNA-bd_sf"/>
</dbReference>
<dbReference type="NCBIfam" id="NF000868">
    <property type="entry name" value="PRK00080.1"/>
    <property type="match status" value="1"/>
</dbReference>
<dbReference type="NCBIfam" id="TIGR00635">
    <property type="entry name" value="ruvB"/>
    <property type="match status" value="1"/>
</dbReference>
<dbReference type="PANTHER" id="PTHR42848">
    <property type="match status" value="1"/>
</dbReference>
<dbReference type="PANTHER" id="PTHR42848:SF1">
    <property type="entry name" value="HOLLIDAY JUNCTION BRANCH MIGRATION COMPLEX SUBUNIT RUVB"/>
    <property type="match status" value="1"/>
</dbReference>
<dbReference type="Pfam" id="PF17864">
    <property type="entry name" value="AAA_lid_4"/>
    <property type="match status" value="1"/>
</dbReference>
<dbReference type="Pfam" id="PF05491">
    <property type="entry name" value="RuvB_C"/>
    <property type="match status" value="1"/>
</dbReference>
<dbReference type="Pfam" id="PF05496">
    <property type="entry name" value="RuvB_N"/>
    <property type="match status" value="1"/>
</dbReference>
<dbReference type="SMART" id="SM00382">
    <property type="entry name" value="AAA"/>
    <property type="match status" value="1"/>
</dbReference>
<dbReference type="SUPFAM" id="SSF52540">
    <property type="entry name" value="P-loop containing nucleoside triphosphate hydrolases"/>
    <property type="match status" value="1"/>
</dbReference>
<dbReference type="SUPFAM" id="SSF46785">
    <property type="entry name" value="Winged helix' DNA-binding domain"/>
    <property type="match status" value="1"/>
</dbReference>
<evidence type="ECO:0000255" key="1">
    <source>
        <dbReference type="HAMAP-Rule" id="MF_00016"/>
    </source>
</evidence>
<name>RUVB_OENOB</name>
<sequence>MNDEDQKILDAKPIADEIDSELTLRPKYLREYIGQKEIKDQLSVYLKAAKQRDEALDHVLLFGPPGLGKTTLAIVIANEMGAKIKTTSGPAIEKTGDLVALLNELTAGDILFIDEIHRLPKSVEEVLYSAMEDFYVDIVVGQGETAHAIHFPLPPFTLIGATTRAGMLSAPLRDRFGIVAHMQFYPVSDLKLIAKRTAEIFDTSIAGSGAAELALRSRGTPRIVNRLLKRVRDFAQVAGKDTIDEQIVDNALNKLHVDARGLDETDLKYLNTLIHQYKGGPAGVNALASNIGEDSETVEEMVEPYLLQIGFIQRTPRGRQATQAAYEHLQIPYQTGLS</sequence>
<comment type="function">
    <text evidence="1">The RuvA-RuvB-RuvC complex processes Holliday junction (HJ) DNA during genetic recombination and DNA repair, while the RuvA-RuvB complex plays an important role in the rescue of blocked DNA replication forks via replication fork reversal (RFR). RuvA specifically binds to HJ cruciform DNA, conferring on it an open structure. The RuvB hexamer acts as an ATP-dependent pump, pulling dsDNA into and through the RuvAB complex. RuvB forms 2 homohexamers on either side of HJ DNA bound by 1 or 2 RuvA tetramers; 4 subunits per hexamer contact DNA at a time. Coordinated motions by a converter formed by DNA-disengaged RuvB subunits stimulates ATP hydrolysis and nucleotide exchange. Immobilization of the converter enables RuvB to convert the ATP-contained energy into a lever motion, pulling 2 nucleotides of DNA out of the RuvA tetramer per ATP hydrolyzed, thus driving DNA branch migration. The RuvB motors rotate together with the DNA substrate, which together with the progressing nucleotide cycle form the mechanistic basis for DNA recombination by continuous HJ branch migration. Branch migration allows RuvC to scan DNA until it finds its consensus sequence, where it cleaves and resolves cruciform DNA.</text>
</comment>
<comment type="catalytic activity">
    <reaction evidence="1">
        <text>ATP + H2O = ADP + phosphate + H(+)</text>
        <dbReference type="Rhea" id="RHEA:13065"/>
        <dbReference type="ChEBI" id="CHEBI:15377"/>
        <dbReference type="ChEBI" id="CHEBI:15378"/>
        <dbReference type="ChEBI" id="CHEBI:30616"/>
        <dbReference type="ChEBI" id="CHEBI:43474"/>
        <dbReference type="ChEBI" id="CHEBI:456216"/>
    </reaction>
</comment>
<comment type="subunit">
    <text evidence="1">Homohexamer. Forms an RuvA(8)-RuvB(12)-Holliday junction (HJ) complex. HJ DNA is sandwiched between 2 RuvA tetramers; dsDNA enters through RuvA and exits via RuvB. An RuvB hexamer assembles on each DNA strand where it exits the tetramer. Each RuvB hexamer is contacted by two RuvA subunits (via domain III) on 2 adjacent RuvB subunits; this complex drives branch migration. In the full resolvosome a probable DNA-RuvA(4)-RuvB(12)-RuvC(2) complex forms which resolves the HJ.</text>
</comment>
<comment type="subcellular location">
    <subcellularLocation>
        <location evidence="1">Cytoplasm</location>
    </subcellularLocation>
</comment>
<comment type="domain">
    <text evidence="1">Has 3 domains, the large (RuvB-L) and small ATPase (RuvB-S) domains and the C-terminal head (RuvB-H) domain. The head domain binds DNA, while the ATPase domains jointly bind ATP, ADP or are empty depending on the state of the subunit in the translocation cycle. During a single DNA translocation step the structure of each domain remains the same, but their relative positions change.</text>
</comment>
<comment type="similarity">
    <text evidence="1">Belongs to the RuvB family.</text>
</comment>
<keyword id="KW-0067">ATP-binding</keyword>
<keyword id="KW-0963">Cytoplasm</keyword>
<keyword id="KW-0227">DNA damage</keyword>
<keyword id="KW-0233">DNA recombination</keyword>
<keyword id="KW-0234">DNA repair</keyword>
<keyword id="KW-0238">DNA-binding</keyword>
<keyword id="KW-0378">Hydrolase</keyword>
<keyword id="KW-0547">Nucleotide-binding</keyword>
<keyword id="KW-1185">Reference proteome</keyword>
<feature type="chain" id="PRO_0000322825" description="Holliday junction branch migration complex subunit RuvB">
    <location>
        <begin position="1"/>
        <end position="338"/>
    </location>
</feature>
<feature type="region of interest" description="Large ATPase domain (RuvB-L)" evidence="1">
    <location>
        <begin position="4"/>
        <end position="185"/>
    </location>
</feature>
<feature type="region of interest" description="Small ATPAse domain (RuvB-S)" evidence="1">
    <location>
        <begin position="186"/>
        <end position="256"/>
    </location>
</feature>
<feature type="region of interest" description="Head domain (RuvB-H)" evidence="1">
    <location>
        <begin position="259"/>
        <end position="338"/>
    </location>
</feature>
<feature type="binding site" evidence="1">
    <location>
        <position position="24"/>
    </location>
    <ligand>
        <name>ATP</name>
        <dbReference type="ChEBI" id="CHEBI:30616"/>
    </ligand>
</feature>
<feature type="binding site" evidence="1">
    <location>
        <position position="25"/>
    </location>
    <ligand>
        <name>ATP</name>
        <dbReference type="ChEBI" id="CHEBI:30616"/>
    </ligand>
</feature>
<feature type="binding site" evidence="1">
    <location>
        <position position="66"/>
    </location>
    <ligand>
        <name>ATP</name>
        <dbReference type="ChEBI" id="CHEBI:30616"/>
    </ligand>
</feature>
<feature type="binding site" evidence="1">
    <location>
        <position position="69"/>
    </location>
    <ligand>
        <name>ATP</name>
        <dbReference type="ChEBI" id="CHEBI:30616"/>
    </ligand>
</feature>
<feature type="binding site" evidence="1">
    <location>
        <position position="70"/>
    </location>
    <ligand>
        <name>ATP</name>
        <dbReference type="ChEBI" id="CHEBI:30616"/>
    </ligand>
</feature>
<feature type="binding site" evidence="1">
    <location>
        <position position="70"/>
    </location>
    <ligand>
        <name>Mg(2+)</name>
        <dbReference type="ChEBI" id="CHEBI:18420"/>
    </ligand>
</feature>
<feature type="binding site" evidence="1">
    <location>
        <position position="71"/>
    </location>
    <ligand>
        <name>ATP</name>
        <dbReference type="ChEBI" id="CHEBI:30616"/>
    </ligand>
</feature>
<feature type="binding site" evidence="1">
    <location>
        <begin position="132"/>
        <end position="134"/>
    </location>
    <ligand>
        <name>ATP</name>
        <dbReference type="ChEBI" id="CHEBI:30616"/>
    </ligand>
</feature>
<feature type="binding site" evidence="1">
    <location>
        <position position="175"/>
    </location>
    <ligand>
        <name>ATP</name>
        <dbReference type="ChEBI" id="CHEBI:30616"/>
    </ligand>
</feature>
<feature type="binding site" evidence="1">
    <location>
        <position position="185"/>
    </location>
    <ligand>
        <name>ATP</name>
        <dbReference type="ChEBI" id="CHEBI:30616"/>
    </ligand>
</feature>
<feature type="binding site" evidence="1">
    <location>
        <position position="222"/>
    </location>
    <ligand>
        <name>ATP</name>
        <dbReference type="ChEBI" id="CHEBI:30616"/>
    </ligand>
</feature>
<feature type="binding site" evidence="1">
    <location>
        <position position="314"/>
    </location>
    <ligand>
        <name>DNA</name>
        <dbReference type="ChEBI" id="CHEBI:16991"/>
    </ligand>
</feature>
<feature type="binding site" evidence="1">
    <location>
        <position position="319"/>
    </location>
    <ligand>
        <name>DNA</name>
        <dbReference type="ChEBI" id="CHEBI:16991"/>
    </ligand>
</feature>
<reference key="1">
    <citation type="journal article" date="2006" name="Proc. Natl. Acad. Sci. U.S.A.">
        <title>Comparative genomics of the lactic acid bacteria.</title>
        <authorList>
            <person name="Makarova K.S."/>
            <person name="Slesarev A."/>
            <person name="Wolf Y.I."/>
            <person name="Sorokin A."/>
            <person name="Mirkin B."/>
            <person name="Koonin E.V."/>
            <person name="Pavlov A."/>
            <person name="Pavlova N."/>
            <person name="Karamychev V."/>
            <person name="Polouchine N."/>
            <person name="Shakhova V."/>
            <person name="Grigoriev I."/>
            <person name="Lou Y."/>
            <person name="Rohksar D."/>
            <person name="Lucas S."/>
            <person name="Huang K."/>
            <person name="Goodstein D.M."/>
            <person name="Hawkins T."/>
            <person name="Plengvidhya V."/>
            <person name="Welker D."/>
            <person name="Hughes J."/>
            <person name="Goh Y."/>
            <person name="Benson A."/>
            <person name="Baldwin K."/>
            <person name="Lee J.-H."/>
            <person name="Diaz-Muniz I."/>
            <person name="Dosti B."/>
            <person name="Smeianov V."/>
            <person name="Wechter W."/>
            <person name="Barabote R."/>
            <person name="Lorca G."/>
            <person name="Altermann E."/>
            <person name="Barrangou R."/>
            <person name="Ganesan B."/>
            <person name="Xie Y."/>
            <person name="Rawsthorne H."/>
            <person name="Tamir D."/>
            <person name="Parker C."/>
            <person name="Breidt F."/>
            <person name="Broadbent J.R."/>
            <person name="Hutkins R."/>
            <person name="O'Sullivan D."/>
            <person name="Steele J."/>
            <person name="Unlu G."/>
            <person name="Saier M.H. Jr."/>
            <person name="Klaenhammer T."/>
            <person name="Richardson P."/>
            <person name="Kozyavkin S."/>
            <person name="Weimer B.C."/>
            <person name="Mills D.A."/>
        </authorList>
    </citation>
    <scope>NUCLEOTIDE SEQUENCE [LARGE SCALE GENOMIC DNA]</scope>
    <source>
        <strain>ATCC BAA-331 / PSU-1</strain>
    </source>
</reference>
<proteinExistence type="inferred from homology"/>
<organism>
    <name type="scientific">Oenococcus oeni (strain ATCC BAA-331 / PSU-1)</name>
    <dbReference type="NCBI Taxonomy" id="203123"/>
    <lineage>
        <taxon>Bacteria</taxon>
        <taxon>Bacillati</taxon>
        <taxon>Bacillota</taxon>
        <taxon>Bacilli</taxon>
        <taxon>Lactobacillales</taxon>
        <taxon>Lactobacillaceae</taxon>
        <taxon>Oenococcus</taxon>
    </lineage>
</organism>